<reference key="1">
    <citation type="journal article" date="2003" name="J. Bacteriol.">
        <title>Comparative genomics of Salmonella enterica serovar Typhi strains Ty2 and CT18.</title>
        <authorList>
            <person name="Deng W."/>
            <person name="Liou S.-R."/>
            <person name="Plunkett G. III"/>
            <person name="Mayhew G.F."/>
            <person name="Rose D.J."/>
            <person name="Burland V."/>
            <person name="Kodoyianni V."/>
            <person name="Schwartz D.C."/>
            <person name="Blattner F.R."/>
        </authorList>
    </citation>
    <scope>NUCLEOTIDE SEQUENCE [LARGE SCALE GENOMIC DNA]</scope>
    <source>
        <strain>ATCC 700931 / Ty2</strain>
    </source>
</reference>
<reference key="2">
    <citation type="journal article" date="2001" name="Nature">
        <title>Complete genome sequence of a multiple drug resistant Salmonella enterica serovar Typhi CT18.</title>
        <authorList>
            <person name="Parkhill J."/>
            <person name="Dougan G."/>
            <person name="James K.D."/>
            <person name="Thomson N.R."/>
            <person name="Pickard D."/>
            <person name="Wain J."/>
            <person name="Churcher C.M."/>
            <person name="Mungall K.L."/>
            <person name="Bentley S.D."/>
            <person name="Holden M.T.G."/>
            <person name="Sebaihia M."/>
            <person name="Baker S."/>
            <person name="Basham D."/>
            <person name="Brooks K."/>
            <person name="Chillingworth T."/>
            <person name="Connerton P."/>
            <person name="Cronin A."/>
            <person name="Davis P."/>
            <person name="Davies R.M."/>
            <person name="Dowd L."/>
            <person name="White N."/>
            <person name="Farrar J."/>
            <person name="Feltwell T."/>
            <person name="Hamlin N."/>
            <person name="Haque A."/>
            <person name="Hien T.T."/>
            <person name="Holroyd S."/>
            <person name="Jagels K."/>
            <person name="Krogh A."/>
            <person name="Larsen T.S."/>
            <person name="Leather S."/>
            <person name="Moule S."/>
            <person name="O'Gaora P."/>
            <person name="Parry C."/>
            <person name="Quail M.A."/>
            <person name="Rutherford K.M."/>
            <person name="Simmonds M."/>
            <person name="Skelton J."/>
            <person name="Stevens K."/>
            <person name="Whitehead S."/>
            <person name="Barrell B.G."/>
        </authorList>
    </citation>
    <scope>NUCLEOTIDE SEQUENCE [LARGE SCALE GENOMIC DNA]</scope>
    <source>
        <strain>CT18</strain>
    </source>
</reference>
<organism>
    <name type="scientific">Salmonella typhi</name>
    <dbReference type="NCBI Taxonomy" id="90370"/>
    <lineage>
        <taxon>Bacteria</taxon>
        <taxon>Pseudomonadati</taxon>
        <taxon>Pseudomonadota</taxon>
        <taxon>Gammaproteobacteria</taxon>
        <taxon>Enterobacterales</taxon>
        <taxon>Enterobacteriaceae</taxon>
        <taxon>Salmonella</taxon>
    </lineage>
</organism>
<dbReference type="EC" id="2.3.1.251" evidence="1"/>
<dbReference type="EMBL" id="AE014613">
    <property type="protein sequence ID" value="AAO69841.1"/>
    <property type="molecule type" value="Genomic_DNA"/>
</dbReference>
<dbReference type="EMBL" id="AL513382">
    <property type="protein sequence ID" value="CAD05105.1"/>
    <property type="molecule type" value="Genomic_DNA"/>
</dbReference>
<dbReference type="RefSeq" id="NP_455205.1">
    <property type="nucleotide sequence ID" value="NC_003198.1"/>
</dbReference>
<dbReference type="RefSeq" id="WP_001784638.1">
    <property type="nucleotide sequence ID" value="NZ_WSUR01000015.1"/>
</dbReference>
<dbReference type="SMR" id="Q8Z8I4"/>
<dbReference type="STRING" id="220341.gene:17584686"/>
<dbReference type="KEGG" id="stt:t2239"/>
<dbReference type="KEGG" id="sty:STY0677"/>
<dbReference type="PATRIC" id="fig|220341.7.peg.680"/>
<dbReference type="eggNOG" id="ENOG502Z7SY">
    <property type="taxonomic scope" value="Bacteria"/>
</dbReference>
<dbReference type="HOGENOM" id="CLU_104099_0_0_6"/>
<dbReference type="OMA" id="FFAWLRW"/>
<dbReference type="OrthoDB" id="9156803at2"/>
<dbReference type="Proteomes" id="UP000000541">
    <property type="component" value="Chromosome"/>
</dbReference>
<dbReference type="Proteomes" id="UP000002670">
    <property type="component" value="Chromosome"/>
</dbReference>
<dbReference type="GO" id="GO:0009279">
    <property type="term" value="C:cell outer membrane"/>
    <property type="evidence" value="ECO:0007669"/>
    <property type="project" value="UniProtKB-SubCell"/>
</dbReference>
<dbReference type="GO" id="GO:0016746">
    <property type="term" value="F:acyltransferase activity"/>
    <property type="evidence" value="ECO:0007669"/>
    <property type="project" value="UniProtKB-UniRule"/>
</dbReference>
<dbReference type="GO" id="GO:0009245">
    <property type="term" value="P:lipid A biosynthetic process"/>
    <property type="evidence" value="ECO:0007669"/>
    <property type="project" value="UniProtKB-UniRule"/>
</dbReference>
<dbReference type="FunFam" id="2.40.160.20:FF:000002">
    <property type="entry name" value="Lipid A palmitoyltransferase PagP"/>
    <property type="match status" value="1"/>
</dbReference>
<dbReference type="Gene3D" id="2.40.160.20">
    <property type="match status" value="1"/>
</dbReference>
<dbReference type="HAMAP" id="MF_00837">
    <property type="entry name" value="PagP_transferase"/>
    <property type="match status" value="1"/>
</dbReference>
<dbReference type="InterPro" id="IPR009746">
    <property type="entry name" value="LipidA_acyl_PagP"/>
</dbReference>
<dbReference type="InterPro" id="IPR011250">
    <property type="entry name" value="OMP/PagP_b-brl"/>
</dbReference>
<dbReference type="NCBIfam" id="NF008271">
    <property type="entry name" value="PRK11045.1"/>
    <property type="match status" value="1"/>
</dbReference>
<dbReference type="Pfam" id="PF07017">
    <property type="entry name" value="PagP"/>
    <property type="match status" value="1"/>
</dbReference>
<dbReference type="SUPFAM" id="SSF56925">
    <property type="entry name" value="OMPA-like"/>
    <property type="match status" value="1"/>
</dbReference>
<gene>
    <name evidence="1" type="primary">pagP</name>
    <name type="ordered locus">STY0677</name>
    <name type="ordered locus">t2239</name>
</gene>
<name>PAGP_SALTI</name>
<accession>Q8Z8I4</accession>
<accession>Q7C8J9</accession>
<keyword id="KW-0012">Acyltransferase</keyword>
<keyword id="KW-0998">Cell outer membrane</keyword>
<keyword id="KW-0472">Membrane</keyword>
<keyword id="KW-0732">Signal</keyword>
<keyword id="KW-0808">Transferase</keyword>
<protein>
    <recommendedName>
        <fullName evidence="1">Lipid A acyltransferase PagP</fullName>
        <ecNumber evidence="1">2.3.1.251</ecNumber>
    </recommendedName>
    <alternativeName>
        <fullName evidence="1">Lipid A acylation protein</fullName>
    </alternativeName>
</protein>
<proteinExistence type="inferred from homology"/>
<comment type="function">
    <text evidence="1">Transfers a fatty acid residue from the sn-1 position of a phospholipid to the N-linked hydroxyfatty acid chain on the proximal unit of lipid A or its precursors.</text>
</comment>
<comment type="catalytic activity">
    <reaction evidence="1">
        <text>a lipid A + a 1,2-diacyl-sn-glycero-3-phosphocholine = a hepta-acyl lipid A + a 2-acyl-sn-glycero-3-phosphocholine</text>
        <dbReference type="Rhea" id="RHEA:74275"/>
        <dbReference type="ChEBI" id="CHEBI:57643"/>
        <dbReference type="ChEBI" id="CHEBI:57875"/>
        <dbReference type="ChEBI" id="CHEBI:193141"/>
        <dbReference type="ChEBI" id="CHEBI:193142"/>
        <dbReference type="EC" id="2.3.1.251"/>
    </reaction>
</comment>
<comment type="catalytic activity">
    <reaction evidence="1">
        <text>a lipid IVA + a 1,2-diacyl-sn-glycero-3-phosphocholine = a lipid IVB + a 2-acyl-sn-glycero-3-phosphocholine</text>
        <dbReference type="Rhea" id="RHEA:74279"/>
        <dbReference type="ChEBI" id="CHEBI:57643"/>
        <dbReference type="ChEBI" id="CHEBI:57875"/>
        <dbReference type="ChEBI" id="CHEBI:176425"/>
        <dbReference type="ChEBI" id="CHEBI:193143"/>
        <dbReference type="EC" id="2.3.1.251"/>
    </reaction>
</comment>
<comment type="catalytic activity">
    <reaction evidence="1">
        <text>a lipid IIA + a 1,2-diacyl-sn-glycero-3-phosphocholine = a lipid IIB + a 2-acyl-sn-glycero-3-phosphocholine</text>
        <dbReference type="Rhea" id="RHEA:74283"/>
        <dbReference type="ChEBI" id="CHEBI:57643"/>
        <dbReference type="ChEBI" id="CHEBI:57875"/>
        <dbReference type="ChEBI" id="CHEBI:193144"/>
        <dbReference type="ChEBI" id="CHEBI:193145"/>
        <dbReference type="EC" id="2.3.1.251"/>
    </reaction>
</comment>
<comment type="subunit">
    <text evidence="1">Homodimer.</text>
</comment>
<comment type="subcellular location">
    <subcellularLocation>
        <location evidence="1">Cell outer membrane</location>
    </subcellularLocation>
</comment>
<comment type="similarity">
    <text evidence="1">Belongs to the lipid A palmitoyltransferase family.</text>
</comment>
<sequence length="190" mass="22340">MYVAMIIRKYFLIIALLVMPWLAIPSVSAADKGWFNTFTDNVAETWRQPEYYDLYVPAITWHARFAYDKEKTDRYNERPWGVGFGQSRWDDKGNWHGLYMMAFKDSFNKWEPIGGYGWEKTWRPLEDDNFRLGLGFTAGVTARDNWNYIPIPVLLPLASIGYGPATFQMTYIPGSYNNGNVYFAWMRFQF</sequence>
<evidence type="ECO:0000255" key="1">
    <source>
        <dbReference type="HAMAP-Rule" id="MF_00837"/>
    </source>
</evidence>
<feature type="signal peptide" evidence="1">
    <location>
        <begin position="1"/>
        <end position="29"/>
    </location>
</feature>
<feature type="chain" id="PRO_0000414472" description="Lipid A acyltransferase PagP">
    <location>
        <begin position="30"/>
        <end position="190"/>
    </location>
</feature>
<feature type="active site" evidence="1">
    <location>
        <position position="62"/>
    </location>
</feature>
<feature type="active site" evidence="1">
    <location>
        <position position="105"/>
    </location>
</feature>
<feature type="active site" evidence="1">
    <location>
        <position position="106"/>
    </location>
</feature>
<feature type="site" description="Role in lipopolysaccharide recognition" evidence="1">
    <location>
        <position position="71"/>
    </location>
</feature>
<feature type="site" description="Role in the phospholipid gating" evidence="1">
    <location>
        <position position="176"/>
    </location>
</feature>